<organism>
    <name type="scientific">Lysinibacillus sphaericus (strain C3-41)</name>
    <dbReference type="NCBI Taxonomy" id="444177"/>
    <lineage>
        <taxon>Bacteria</taxon>
        <taxon>Bacillati</taxon>
        <taxon>Bacillota</taxon>
        <taxon>Bacilli</taxon>
        <taxon>Bacillales</taxon>
        <taxon>Bacillaceae</taxon>
        <taxon>Lysinibacillus</taxon>
    </lineage>
</organism>
<name>MUTS_LYSSC</name>
<reference key="1">
    <citation type="journal article" date="2008" name="J. Bacteriol.">
        <title>Complete genome sequence of the mosquitocidal bacterium Bacillus sphaericus C3-41 and comparison with those of closely related Bacillus species.</title>
        <authorList>
            <person name="Hu X."/>
            <person name="Fan W."/>
            <person name="Han B."/>
            <person name="Liu H."/>
            <person name="Zheng D."/>
            <person name="Li Q."/>
            <person name="Dong W."/>
            <person name="Yan J."/>
            <person name="Gao M."/>
            <person name="Berry C."/>
            <person name="Yuan Z."/>
        </authorList>
    </citation>
    <scope>NUCLEOTIDE SEQUENCE [LARGE SCALE GENOMIC DNA]</scope>
    <source>
        <strain>C3-41</strain>
    </source>
</reference>
<comment type="function">
    <text evidence="1">This protein is involved in the repair of mismatches in DNA. It is possible that it carries out the mismatch recognition step. This protein has a weak ATPase activity.</text>
</comment>
<comment type="similarity">
    <text evidence="1">Belongs to the DNA mismatch repair MutS family.</text>
</comment>
<keyword id="KW-0067">ATP-binding</keyword>
<keyword id="KW-0227">DNA damage</keyword>
<keyword id="KW-0234">DNA repair</keyword>
<keyword id="KW-0238">DNA-binding</keyword>
<keyword id="KW-0547">Nucleotide-binding</keyword>
<accession>B1HRG8</accession>
<feature type="chain" id="PRO_1000117290" description="DNA mismatch repair protein MutS">
    <location>
        <begin position="1"/>
        <end position="856"/>
    </location>
</feature>
<feature type="binding site" evidence="1">
    <location>
        <begin position="605"/>
        <end position="612"/>
    </location>
    <ligand>
        <name>ATP</name>
        <dbReference type="ChEBI" id="CHEBI:30616"/>
    </ligand>
</feature>
<proteinExistence type="inferred from homology"/>
<gene>
    <name evidence="1" type="primary">mutS</name>
    <name type="ordered locus">Bsph_1655</name>
</gene>
<evidence type="ECO:0000255" key="1">
    <source>
        <dbReference type="HAMAP-Rule" id="MF_00096"/>
    </source>
</evidence>
<protein>
    <recommendedName>
        <fullName evidence="1">DNA mismatch repair protein MutS</fullName>
    </recommendedName>
</protein>
<dbReference type="EMBL" id="CP000817">
    <property type="protein sequence ID" value="ACA39253.1"/>
    <property type="molecule type" value="Genomic_DNA"/>
</dbReference>
<dbReference type="RefSeq" id="WP_012293356.1">
    <property type="nucleotide sequence ID" value="NC_010382.1"/>
</dbReference>
<dbReference type="SMR" id="B1HRG8"/>
<dbReference type="EnsemblBacteria" id="ACA39253">
    <property type="protein sequence ID" value="ACA39253"/>
    <property type="gene ID" value="Bsph_1655"/>
</dbReference>
<dbReference type="KEGG" id="lsp:Bsph_1655"/>
<dbReference type="HOGENOM" id="CLU_002472_4_0_9"/>
<dbReference type="Proteomes" id="UP000002164">
    <property type="component" value="Chromosome"/>
</dbReference>
<dbReference type="GO" id="GO:0005829">
    <property type="term" value="C:cytosol"/>
    <property type="evidence" value="ECO:0007669"/>
    <property type="project" value="TreeGrafter"/>
</dbReference>
<dbReference type="GO" id="GO:0005524">
    <property type="term" value="F:ATP binding"/>
    <property type="evidence" value="ECO:0007669"/>
    <property type="project" value="UniProtKB-UniRule"/>
</dbReference>
<dbReference type="GO" id="GO:0140664">
    <property type="term" value="F:ATP-dependent DNA damage sensor activity"/>
    <property type="evidence" value="ECO:0007669"/>
    <property type="project" value="InterPro"/>
</dbReference>
<dbReference type="GO" id="GO:0003684">
    <property type="term" value="F:damaged DNA binding"/>
    <property type="evidence" value="ECO:0007669"/>
    <property type="project" value="UniProtKB-UniRule"/>
</dbReference>
<dbReference type="GO" id="GO:0030983">
    <property type="term" value="F:mismatched DNA binding"/>
    <property type="evidence" value="ECO:0007669"/>
    <property type="project" value="InterPro"/>
</dbReference>
<dbReference type="GO" id="GO:0006298">
    <property type="term" value="P:mismatch repair"/>
    <property type="evidence" value="ECO:0007669"/>
    <property type="project" value="UniProtKB-UniRule"/>
</dbReference>
<dbReference type="CDD" id="cd03284">
    <property type="entry name" value="ABC_MutS1"/>
    <property type="match status" value="1"/>
</dbReference>
<dbReference type="FunFam" id="1.10.1420.10:FF:000007">
    <property type="entry name" value="DNA mismatch repair protein MutS"/>
    <property type="match status" value="1"/>
</dbReference>
<dbReference type="FunFam" id="3.40.1170.10:FF:000001">
    <property type="entry name" value="DNA mismatch repair protein MutS"/>
    <property type="match status" value="1"/>
</dbReference>
<dbReference type="FunFam" id="3.40.50.300:FF:000896">
    <property type="entry name" value="DNA mismatch repair protein MutS"/>
    <property type="match status" value="1"/>
</dbReference>
<dbReference type="Gene3D" id="1.10.1420.10">
    <property type="match status" value="2"/>
</dbReference>
<dbReference type="Gene3D" id="3.40.1170.10">
    <property type="entry name" value="DNA repair protein MutS, domain I"/>
    <property type="match status" value="1"/>
</dbReference>
<dbReference type="Gene3D" id="3.30.420.110">
    <property type="entry name" value="MutS, connector domain"/>
    <property type="match status" value="1"/>
</dbReference>
<dbReference type="Gene3D" id="3.40.50.300">
    <property type="entry name" value="P-loop containing nucleotide triphosphate hydrolases"/>
    <property type="match status" value="1"/>
</dbReference>
<dbReference type="HAMAP" id="MF_00096">
    <property type="entry name" value="MutS"/>
    <property type="match status" value="1"/>
</dbReference>
<dbReference type="InterPro" id="IPR005748">
    <property type="entry name" value="DNA_mismatch_repair_MutS"/>
</dbReference>
<dbReference type="InterPro" id="IPR007695">
    <property type="entry name" value="DNA_mismatch_repair_MutS-lik_N"/>
</dbReference>
<dbReference type="InterPro" id="IPR017261">
    <property type="entry name" value="DNA_mismatch_repair_MutS/MSH"/>
</dbReference>
<dbReference type="InterPro" id="IPR000432">
    <property type="entry name" value="DNA_mismatch_repair_MutS_C"/>
</dbReference>
<dbReference type="InterPro" id="IPR007861">
    <property type="entry name" value="DNA_mismatch_repair_MutS_clamp"/>
</dbReference>
<dbReference type="InterPro" id="IPR007696">
    <property type="entry name" value="DNA_mismatch_repair_MutS_core"/>
</dbReference>
<dbReference type="InterPro" id="IPR016151">
    <property type="entry name" value="DNA_mismatch_repair_MutS_N"/>
</dbReference>
<dbReference type="InterPro" id="IPR036187">
    <property type="entry name" value="DNA_mismatch_repair_MutS_sf"/>
</dbReference>
<dbReference type="InterPro" id="IPR007860">
    <property type="entry name" value="DNA_mmatch_repair_MutS_con_dom"/>
</dbReference>
<dbReference type="InterPro" id="IPR045076">
    <property type="entry name" value="MutS"/>
</dbReference>
<dbReference type="InterPro" id="IPR036678">
    <property type="entry name" value="MutS_con_dom_sf"/>
</dbReference>
<dbReference type="InterPro" id="IPR027417">
    <property type="entry name" value="P-loop_NTPase"/>
</dbReference>
<dbReference type="NCBIfam" id="TIGR01070">
    <property type="entry name" value="mutS1"/>
    <property type="match status" value="1"/>
</dbReference>
<dbReference type="NCBIfam" id="NF003810">
    <property type="entry name" value="PRK05399.1"/>
    <property type="match status" value="1"/>
</dbReference>
<dbReference type="PANTHER" id="PTHR11361:SF34">
    <property type="entry name" value="DNA MISMATCH REPAIR PROTEIN MSH1, MITOCHONDRIAL"/>
    <property type="match status" value="1"/>
</dbReference>
<dbReference type="PANTHER" id="PTHR11361">
    <property type="entry name" value="DNA MISMATCH REPAIR PROTEIN MUTS FAMILY MEMBER"/>
    <property type="match status" value="1"/>
</dbReference>
<dbReference type="Pfam" id="PF01624">
    <property type="entry name" value="MutS_I"/>
    <property type="match status" value="1"/>
</dbReference>
<dbReference type="Pfam" id="PF05188">
    <property type="entry name" value="MutS_II"/>
    <property type="match status" value="1"/>
</dbReference>
<dbReference type="Pfam" id="PF05192">
    <property type="entry name" value="MutS_III"/>
    <property type="match status" value="1"/>
</dbReference>
<dbReference type="Pfam" id="PF05190">
    <property type="entry name" value="MutS_IV"/>
    <property type="match status" value="1"/>
</dbReference>
<dbReference type="Pfam" id="PF00488">
    <property type="entry name" value="MutS_V"/>
    <property type="match status" value="1"/>
</dbReference>
<dbReference type="PIRSF" id="PIRSF037677">
    <property type="entry name" value="DNA_mis_repair_Msh6"/>
    <property type="match status" value="1"/>
</dbReference>
<dbReference type="SMART" id="SM00534">
    <property type="entry name" value="MUTSac"/>
    <property type="match status" value="1"/>
</dbReference>
<dbReference type="SMART" id="SM00533">
    <property type="entry name" value="MUTSd"/>
    <property type="match status" value="1"/>
</dbReference>
<dbReference type="SUPFAM" id="SSF55271">
    <property type="entry name" value="DNA repair protein MutS, domain I"/>
    <property type="match status" value="1"/>
</dbReference>
<dbReference type="SUPFAM" id="SSF53150">
    <property type="entry name" value="DNA repair protein MutS, domain II"/>
    <property type="match status" value="1"/>
</dbReference>
<dbReference type="SUPFAM" id="SSF48334">
    <property type="entry name" value="DNA repair protein MutS, domain III"/>
    <property type="match status" value="1"/>
</dbReference>
<dbReference type="SUPFAM" id="SSF52540">
    <property type="entry name" value="P-loop containing nucleoside triphosphate hydrolases"/>
    <property type="match status" value="1"/>
</dbReference>
<dbReference type="PROSITE" id="PS00486">
    <property type="entry name" value="DNA_MISMATCH_REPAIR_2"/>
    <property type="match status" value="1"/>
</dbReference>
<sequence length="856" mass="96090">MTTYTPMMQQYLQVKEDYKDAFLFFRLGDFYEMFFEDAINASQILEITLTSRDAGAKERIPMCGVPHHSAKNYIETLVQKGYKVAICEQTEDPKQAKGVVKREVVQLITPGTIMEGKTLEGKSNHFIGAAEQLDDTTFGYAYLDLSTGEAVASSIEGDGKALLMQMQAYGIRELIVTDSLQLLLAEHAANAAIVLSVEADEMTMDKAASYVEAVPPALQISCLRLLAYIDKTQMRSLSHIQAFTFNEMKHYLRIDSSSKRNLELIQSIRGGDQKGTLLWLLDDTVTAMGGRKLKQWLHQPLATRSAIESRLAIVTDLLEEYFVRTELQTALKQVYDLERLAGRVAFGNVGGRDLAQLRDSLRQVPAIQQQLMGAGKETLQQIGVALDTCTDVVELLAKAITDNPPITIKEGDVIRDGYHGRLDELRYAARNGKDWIAQLEQEERLKTGIKNLKIGYNRIFGYYIEITKSNIHLADLTRYERKQTLANAERYITQELKEKEALILNAEEESLALEYNLFVEIRDALKEFIPRVQALAASISELDVLLSFASISEKYRFTKPQFHNGRALEIIEGRHPVVEKMLNKQMYVPNDCVLEEQNNMMLITGPNMSGKSTYMRQVALIVVMAQMGCYVPAEKAKLPITDQIFTRIGAADDLAAGQSTFMVEMLESQHAIMHATKNSLMLFDEIGRGTSTYDGMSLAQSMMEYIHDKIGANTLFSTHYHELTALEKDLPRLQNVHVAATEKNGMVVFLHKVKKGAADKSYGIHVAQLAQLPEEILARARVLLENFEAGNEVVAEAQKIAEPPLQMSLFTEEEPMAPAEAEVLKKLEKVNILGTSPMQAMNILYELQQELLNMKK</sequence>